<organism>
    <name type="scientific">Homo sapiens</name>
    <name type="common">Human</name>
    <dbReference type="NCBI Taxonomy" id="9606"/>
    <lineage>
        <taxon>Eukaryota</taxon>
        <taxon>Metazoa</taxon>
        <taxon>Chordata</taxon>
        <taxon>Craniata</taxon>
        <taxon>Vertebrata</taxon>
        <taxon>Euteleostomi</taxon>
        <taxon>Mammalia</taxon>
        <taxon>Eutheria</taxon>
        <taxon>Euarchontoglires</taxon>
        <taxon>Primates</taxon>
        <taxon>Haplorrhini</taxon>
        <taxon>Catarrhini</taxon>
        <taxon>Hominidae</taxon>
        <taxon>Homo</taxon>
    </lineage>
</organism>
<gene>
    <name type="primary">IGF2BP1</name>
    <name type="synonym">CRDBP</name>
    <name type="synonym">VICKZ1</name>
    <name type="synonym">ZBP1</name>
</gene>
<evidence type="ECO:0000250" key="1"/>
<evidence type="ECO:0000250" key="2">
    <source>
        <dbReference type="UniProtKB" id="O88477"/>
    </source>
</evidence>
<evidence type="ECO:0000255" key="3">
    <source>
        <dbReference type="PROSITE-ProRule" id="PRU00117"/>
    </source>
</evidence>
<evidence type="ECO:0000255" key="4">
    <source>
        <dbReference type="PROSITE-ProRule" id="PRU00176"/>
    </source>
</evidence>
<evidence type="ECO:0000256" key="5">
    <source>
        <dbReference type="SAM" id="MobiDB-lite"/>
    </source>
</evidence>
<evidence type="ECO:0000269" key="6">
    <source>
    </source>
</evidence>
<evidence type="ECO:0000269" key="7">
    <source>
    </source>
</evidence>
<evidence type="ECO:0000269" key="8">
    <source>
    </source>
</evidence>
<evidence type="ECO:0000269" key="9">
    <source>
    </source>
</evidence>
<evidence type="ECO:0000269" key="10">
    <source>
    </source>
</evidence>
<evidence type="ECO:0000269" key="11">
    <source>
    </source>
</evidence>
<evidence type="ECO:0000269" key="12">
    <source>
    </source>
</evidence>
<evidence type="ECO:0000269" key="13">
    <source>
    </source>
</evidence>
<evidence type="ECO:0000269" key="14">
    <source>
    </source>
</evidence>
<evidence type="ECO:0000269" key="15">
    <source>
    </source>
</evidence>
<evidence type="ECO:0000269" key="16">
    <source>
    </source>
</evidence>
<evidence type="ECO:0000269" key="17">
    <source>
    </source>
</evidence>
<evidence type="ECO:0000269" key="18">
    <source>
    </source>
</evidence>
<evidence type="ECO:0000269" key="19">
    <source>
    </source>
</evidence>
<evidence type="ECO:0000269" key="20">
    <source>
    </source>
</evidence>
<evidence type="ECO:0000269" key="21">
    <source>
    </source>
</evidence>
<evidence type="ECO:0000269" key="22">
    <source>
    </source>
</evidence>
<evidence type="ECO:0000269" key="23">
    <source>
    </source>
</evidence>
<evidence type="ECO:0000269" key="24">
    <source>
    </source>
</evidence>
<evidence type="ECO:0000269" key="25">
    <source>
    </source>
</evidence>
<evidence type="ECO:0000269" key="26">
    <source>
    </source>
</evidence>
<evidence type="ECO:0000269" key="27">
    <source>
    </source>
</evidence>
<evidence type="ECO:0000269" key="28">
    <source>
    </source>
</evidence>
<evidence type="ECO:0000269" key="29">
    <source>
    </source>
</evidence>
<evidence type="ECO:0000269" key="30">
    <source>
    </source>
</evidence>
<evidence type="ECO:0000303" key="31">
    <source ref="2"/>
</evidence>
<evidence type="ECO:0000305" key="32"/>
<evidence type="ECO:0007744" key="33">
    <source>
    </source>
</evidence>
<evidence type="ECO:0007744" key="34">
    <source>
    </source>
</evidence>
<evidence type="ECO:0007744" key="35">
    <source>
    </source>
</evidence>
<evidence type="ECO:0007744" key="36">
    <source>
    </source>
</evidence>
<evidence type="ECO:0007829" key="37">
    <source>
        <dbReference type="PDB" id="3KRM"/>
    </source>
</evidence>
<evidence type="ECO:0007829" key="38">
    <source>
        <dbReference type="PDB" id="6QEY"/>
    </source>
</evidence>
<feature type="chain" id="PRO_0000282533" description="Insulin-like growth factor 2 mRNA-binding protein 1">
    <location>
        <begin position="1"/>
        <end position="577"/>
    </location>
</feature>
<feature type="domain" description="RRM 1" evidence="4">
    <location>
        <begin position="2"/>
        <end position="75"/>
    </location>
</feature>
<feature type="domain" description="RRM 2" evidence="4">
    <location>
        <begin position="81"/>
        <end position="156"/>
    </location>
</feature>
<feature type="domain" description="KH 1" evidence="3">
    <location>
        <begin position="195"/>
        <end position="260"/>
    </location>
</feature>
<feature type="domain" description="KH 2" evidence="3">
    <location>
        <begin position="276"/>
        <end position="343"/>
    </location>
</feature>
<feature type="domain" description="KH 3" evidence="3">
    <location>
        <begin position="405"/>
        <end position="470"/>
    </location>
</feature>
<feature type="domain" description="KH 4" evidence="3">
    <location>
        <begin position="487"/>
        <end position="553"/>
    </location>
</feature>
<feature type="region of interest" description="Disordered" evidence="5">
    <location>
        <begin position="160"/>
        <end position="190"/>
    </location>
</feature>
<feature type="region of interest" description="Sufficient for nuclear export">
    <location>
        <begin position="310"/>
        <end position="324"/>
    </location>
</feature>
<feature type="region of interest" description="Sufficient for nuclear export">
    <location>
        <begin position="485"/>
        <end position="495"/>
    </location>
</feature>
<feature type="modified residue" description="Phosphoserine" evidence="36">
    <location>
        <position position="12"/>
    </location>
</feature>
<feature type="modified residue" description="Phosphoserine" evidence="36">
    <location>
        <position position="73"/>
    </location>
</feature>
<feature type="modified residue" description="Phosphoserine" evidence="33 34 35 36">
    <location>
        <position position="181"/>
    </location>
</feature>
<feature type="modified residue" description="Phosphothreonine" evidence="36">
    <location>
        <position position="528"/>
    </location>
</feature>
<feature type="splice variant" id="VSP_045366" description="In isoform 2." evidence="31">
    <location>
        <begin position="135"/>
        <end position="273"/>
    </location>
</feature>
<feature type="mutagenesis site" description="50-fold decrease in RNA-binding affinity, decreased location in cytoplasmic RNP, increased nuclear location; when associated with 294-E-L-295 and 423-E-L-424." evidence="7">
    <original>KE</original>
    <variation>EL</variation>
    <location>
        <begin position="213"/>
        <end position="214"/>
    </location>
</feature>
<feature type="mutagenesis site" description="Partial reduction in interaction with m6A-modified mRNA; when associated with E-294." evidence="27">
    <original>K</original>
    <variation>E</variation>
    <location>
        <position position="213"/>
    </location>
</feature>
<feature type="mutagenesis site" description="50-fold decrease in RNA-binding affinity, decreased location in cytoplasmic RNP, increased nuclear location; when associated with 213-E-L-214 and 423-E-L-424." evidence="7">
    <original>KE</original>
    <variation>EL</variation>
    <location>
        <begin position="294"/>
        <end position="295"/>
    </location>
</feature>
<feature type="mutagenesis site" description="Partial reduction in interaction with m6A-modified mRNA; when associated with E-213." evidence="27">
    <original>K</original>
    <variation>E</variation>
    <location>
        <position position="294"/>
    </location>
</feature>
<feature type="mutagenesis site" description="Loss of binding to RBPR and loss of interaction with m6A-modified mRNA; when associated with 505-E-E-506." evidence="27 28">
    <original>KK</original>
    <variation>EE</variation>
    <location>
        <begin position="423"/>
        <end position="424"/>
    </location>
</feature>
<feature type="mutagenesis site" description="50-fold decrease in RNA-binding affinity, decreased location in cytoplasmic RNP, increased nuclear location; when associated with 213-E-L-214 and 294-E-L-295." evidence="7">
    <original>KK</original>
    <variation>EL</variation>
    <location>
        <begin position="423"/>
        <end position="424"/>
    </location>
</feature>
<feature type="mutagenesis site" description="Loss of binding to RBPR and loss of interaction with m6A-modified mRNA; when associated with 423-E-E-424." evidence="27 28">
    <original>KG</original>
    <variation>EE</variation>
    <location>
        <begin position="505"/>
        <end position="506"/>
    </location>
</feature>
<feature type="sequence conflict" description="In Ref. 4; AA sequence." evidence="32" ref="4">
    <location>
        <position position="10"/>
    </location>
</feature>
<feature type="sequence conflict" description="In Ref. 1; AAF37203." evidence="32" ref="1">
    <original>I</original>
    <variation>T</variation>
    <location>
        <position position="281"/>
    </location>
</feature>
<feature type="sequence conflict" description="In Ref. 4; AA sequence." evidence="32" ref="4">
    <location>
        <position position="320"/>
    </location>
</feature>
<feature type="sequence conflict" description="In Ref. 1; AAF37203." evidence="32" ref="1">
    <original>I</original>
    <variation>T</variation>
    <location>
        <position position="365"/>
    </location>
</feature>
<feature type="strand" evidence="38">
    <location>
        <begin position="198"/>
        <end position="203"/>
    </location>
</feature>
<feature type="helix" evidence="38">
    <location>
        <begin position="204"/>
        <end position="206"/>
    </location>
</feature>
<feature type="helix" evidence="38">
    <location>
        <begin position="207"/>
        <end position="211"/>
    </location>
</feature>
<feature type="helix" evidence="38">
    <location>
        <begin position="213"/>
        <end position="215"/>
    </location>
</feature>
<feature type="helix" evidence="38">
    <location>
        <begin position="216"/>
        <end position="225"/>
    </location>
</feature>
<feature type="strand" evidence="38">
    <location>
        <begin position="228"/>
        <end position="232"/>
    </location>
</feature>
<feature type="strand" evidence="38">
    <location>
        <begin position="241"/>
        <end position="248"/>
    </location>
</feature>
<feature type="helix" evidence="38">
    <location>
        <begin position="250"/>
        <end position="270"/>
    </location>
</feature>
<feature type="strand" evidence="38">
    <location>
        <begin position="279"/>
        <end position="284"/>
    </location>
</feature>
<feature type="helix" evidence="38">
    <location>
        <begin position="285"/>
        <end position="292"/>
    </location>
</feature>
<feature type="helix" evidence="38">
    <location>
        <begin position="294"/>
        <end position="296"/>
    </location>
</feature>
<feature type="helix" evidence="38">
    <location>
        <begin position="297"/>
        <end position="306"/>
    </location>
</feature>
<feature type="strand" evidence="38">
    <location>
        <begin position="309"/>
        <end position="312"/>
    </location>
</feature>
<feature type="helix" evidence="38">
    <location>
        <begin position="315"/>
        <end position="317"/>
    </location>
</feature>
<feature type="strand" evidence="38">
    <location>
        <begin position="324"/>
        <end position="331"/>
    </location>
</feature>
<feature type="helix" evidence="38">
    <location>
        <begin position="333"/>
        <end position="361"/>
    </location>
</feature>
<feature type="strand" evidence="37">
    <location>
        <begin position="406"/>
        <end position="413"/>
    </location>
</feature>
<feature type="helix" evidence="37">
    <location>
        <begin position="414"/>
        <end position="416"/>
    </location>
</feature>
<feature type="helix" evidence="37">
    <location>
        <begin position="417"/>
        <end position="421"/>
    </location>
</feature>
<feature type="helix" evidence="37">
    <location>
        <begin position="423"/>
        <end position="425"/>
    </location>
</feature>
<feature type="helix" evidence="37">
    <location>
        <begin position="426"/>
        <end position="435"/>
    </location>
</feature>
<feature type="strand" evidence="37">
    <location>
        <begin position="438"/>
        <end position="441"/>
    </location>
</feature>
<feature type="strand" evidence="37">
    <location>
        <begin position="450"/>
        <end position="458"/>
    </location>
</feature>
<feature type="helix" evidence="37">
    <location>
        <begin position="460"/>
        <end position="476"/>
    </location>
</feature>
<feature type="strand" evidence="37">
    <location>
        <begin position="488"/>
        <end position="495"/>
    </location>
</feature>
<feature type="turn" evidence="37">
    <location>
        <begin position="496"/>
        <end position="498"/>
    </location>
</feature>
<feature type="helix" evidence="37">
    <location>
        <begin position="499"/>
        <end position="503"/>
    </location>
</feature>
<feature type="helix" evidence="37">
    <location>
        <begin position="505"/>
        <end position="507"/>
    </location>
</feature>
<feature type="helix" evidence="37">
    <location>
        <begin position="508"/>
        <end position="517"/>
    </location>
</feature>
<feature type="strand" evidence="37">
    <location>
        <begin position="520"/>
        <end position="522"/>
    </location>
</feature>
<feature type="strand" evidence="37">
    <location>
        <begin position="533"/>
        <end position="541"/>
    </location>
</feature>
<feature type="helix" evidence="37">
    <location>
        <begin position="543"/>
        <end position="560"/>
    </location>
</feature>
<sequence length="577" mass="63481">MNKLYIGNLNESVTPADLEKVFAEHKISYSGQFLVKSGYAFVDCPDEHWAMKAIETFSGKVELQGKRLEIEHSVPKKQRSRKIQIRNIPPQLRWEVLDSLLAQYGTVENCEQVNTESETAVVNVTYSNREQTRQAIMKLNGHQLENHALKVSYIPDEQIAQGPENGRRGGFGSRGQPRQGSPVAAGAPAKQQQVDIPLRLLVPTQYVGAIIGKEGATIRNITKQTQSKIDVHRKENAGAAEKAISVHSTPEGCSSACKMILEIMHKEAKDTKTADEVPLKILAHNNFVGRLIGKEGRNLKKVEQDTETKITISSLQDLTLYNPERTITVKGAIENCCRAEQEIMKKVREAYENDVAAMSLQSHLIPGLNLAAVGLFPASSSAVPPPPSSVTGAAPYSSFMQAPEQEMVQVFIPAQAVGAIIGKKGQHIKQLSRFASASIKIAPPETPDSKVRMVIITGPPEAQFKAQGRIYGKLKEENFFGPKEEVKLETHIRVPASAAGRVIGKGGKTVNELQNLTAAEVVVPRDQTPDENDQVIVKIIGHFYASQMAQRKIRDILAQVKQQHQKGQSNQAQARRK</sequence>
<protein>
    <recommendedName>
        <fullName>Insulin-like growth factor 2 mRNA-binding protein 1</fullName>
        <shortName>IGF2 mRNA-binding protein 1</shortName>
        <shortName>IMP-1</shortName>
        <shortName>IMP1</shortName>
    </recommendedName>
    <alternativeName>
        <fullName>Coding region determinant-binding protein</fullName>
        <shortName>CRD-BP</shortName>
    </alternativeName>
    <alternativeName>
        <fullName>IGF-II mRNA-binding protein 1</fullName>
    </alternativeName>
    <alternativeName>
        <fullName>VICKZ family member 1</fullName>
    </alternativeName>
    <alternativeName>
        <fullName>Zipcode-binding protein 1</fullName>
        <shortName>ZBP-1</shortName>
    </alternativeName>
</protein>
<reference key="1">
    <citation type="submission" date="1999-10" db="EMBL/GenBank/DDBJ databases">
        <title>Ectopic expression of a KH-domain containing protein, highly homologous to both human IMP-1 and mouse CRD-BP, in benign and malignant mesenchymal tumors.</title>
        <authorList>
            <person name="Ioannidis P."/>
            <person name="Trangas T."/>
            <person name="Dimitriadis E."/>
            <person name="Samiotaki M."/>
            <person name="Panoutsakopoulos G."/>
            <person name="Kyriazoglou I."/>
            <person name="Voutzoulias S."/>
            <person name="Tsiapalis C.M."/>
            <person name="Kittas C."/>
            <person name="Agnantis N."/>
            <person name="Pandis N."/>
        </authorList>
    </citation>
    <scope>NUCLEOTIDE SEQUENCE [MRNA] (ISOFORM 1)</scope>
</reference>
<reference key="2">
    <citation type="submission" date="2005-09" db="EMBL/GenBank/DDBJ databases">
        <title>A novel splice variant of the human IGF2 mRNA-binding protein 1 (IMP1/CRD-BP) isolated from human Hep3B hepatoma cells.</title>
        <authorList>
            <person name="Gong H.Y."/>
            <person name="Hu M.C."/>
            <person name="Wu J.L."/>
        </authorList>
    </citation>
    <scope>NUCLEOTIDE SEQUENCE [MRNA] (ISOFORM 2)</scope>
    <scope>ALTERNATIVE SPLICING</scope>
</reference>
<reference key="3">
    <citation type="journal article" date="2006" name="Nature">
        <title>DNA sequence of human chromosome 17 and analysis of rearrangement in the human lineage.</title>
        <authorList>
            <person name="Zody M.C."/>
            <person name="Garber M."/>
            <person name="Adams D.J."/>
            <person name="Sharpe T."/>
            <person name="Harrow J."/>
            <person name="Lupski J.R."/>
            <person name="Nicholson C."/>
            <person name="Searle S.M."/>
            <person name="Wilming L."/>
            <person name="Young S.K."/>
            <person name="Abouelleil A."/>
            <person name="Allen N.R."/>
            <person name="Bi W."/>
            <person name="Bloom T."/>
            <person name="Borowsky M.L."/>
            <person name="Bugalter B.E."/>
            <person name="Butler J."/>
            <person name="Chang J.L."/>
            <person name="Chen C.-K."/>
            <person name="Cook A."/>
            <person name="Corum B."/>
            <person name="Cuomo C.A."/>
            <person name="de Jong P.J."/>
            <person name="DeCaprio D."/>
            <person name="Dewar K."/>
            <person name="FitzGerald M."/>
            <person name="Gilbert J."/>
            <person name="Gibson R."/>
            <person name="Gnerre S."/>
            <person name="Goldstein S."/>
            <person name="Grafham D.V."/>
            <person name="Grocock R."/>
            <person name="Hafez N."/>
            <person name="Hagopian D.S."/>
            <person name="Hart E."/>
            <person name="Norman C.H."/>
            <person name="Humphray S."/>
            <person name="Jaffe D.B."/>
            <person name="Jones M."/>
            <person name="Kamal M."/>
            <person name="Khodiyar V.K."/>
            <person name="LaButti K."/>
            <person name="Laird G."/>
            <person name="Lehoczky J."/>
            <person name="Liu X."/>
            <person name="Lokyitsang T."/>
            <person name="Loveland J."/>
            <person name="Lui A."/>
            <person name="Macdonald P."/>
            <person name="Major J.E."/>
            <person name="Matthews L."/>
            <person name="Mauceli E."/>
            <person name="McCarroll S.A."/>
            <person name="Mihalev A.H."/>
            <person name="Mudge J."/>
            <person name="Nguyen C."/>
            <person name="Nicol R."/>
            <person name="O'Leary S.B."/>
            <person name="Osoegawa K."/>
            <person name="Schwartz D.C."/>
            <person name="Shaw-Smith C."/>
            <person name="Stankiewicz P."/>
            <person name="Steward C."/>
            <person name="Swarbreck D."/>
            <person name="Venkataraman V."/>
            <person name="Whittaker C.A."/>
            <person name="Yang X."/>
            <person name="Zimmer A.R."/>
            <person name="Bradley A."/>
            <person name="Hubbard T."/>
            <person name="Birren B.W."/>
            <person name="Rogers J."/>
            <person name="Lander E.S."/>
            <person name="Nusbaum C."/>
        </authorList>
    </citation>
    <scope>NUCLEOTIDE SEQUENCE [LARGE SCALE GENOMIC DNA]</scope>
</reference>
<reference key="4">
    <citation type="journal article" date="1999" name="Mol. Cell. Biol.">
        <title>A family of insulin-like growth factor II mRNA-binding proteins represses translation in late development.</title>
        <authorList>
            <person name="Nielsen J."/>
            <person name="Christiansen J."/>
            <person name="Lykke-Andersen J."/>
            <person name="Johnsen A.H."/>
            <person name="Wewer U.M."/>
            <person name="Nielsen F.C."/>
        </authorList>
    </citation>
    <scope>PROTEIN SEQUENCE OF 4-19; 26-35; 309-324 AND 508-525</scope>
    <scope>FUNCTION</scope>
    <scope>RNA-BINDING</scope>
    <scope>ASSOCIATION WITH A MRNP COMPLEX</scope>
    <scope>TISSUE SPECIFICITY</scope>
    <scope>GENE NOMENCLATURE</scope>
    <scope>SUBCELLULAR LOCATION</scope>
</reference>
<reference key="5">
    <citation type="journal article" date="2005" name="Nucleic Acids Res.">
        <title>The autoregulatory translational control element of poly(A)-binding protein mRNA forms a heteromeric ribonucleoprotein complex.</title>
        <authorList>
            <person name="Patel G.P."/>
            <person name="Ma S."/>
            <person name="Bag J."/>
        </authorList>
    </citation>
    <scope>PROTEIN SEQUENCE OF 27-35; 66-75 AND 510-524</scope>
    <scope>FUNCTION</scope>
    <scope>IDENTIFICATION IN A MRNP COMPLEX WITH PABPC1 AND CSDE1</scope>
    <scope>IDENTIFICATION BY MASS SPECTROMETRY</scope>
    <scope>RNA-BINDING</scope>
</reference>
<reference key="6">
    <citation type="journal article" date="1998" name="Nucleic Acids Res.">
        <title>The c-myc coding region determinant-binding protein: a member of a family of KH domain RNA-binding proteins.</title>
        <authorList>
            <person name="Doyle G.A."/>
            <person name="Betz N.A."/>
            <person name="Leeds P.F."/>
            <person name="Fleisig A.J."/>
            <person name="Prokipcak R.D."/>
            <person name="Ross J."/>
        </authorList>
    </citation>
    <scope>PROTEIN SEQUENCE OF 413-429 AND 510-524</scope>
    <scope>SUBCELLULAR LOCATION</scope>
    <scope>RNA-BINDING</scope>
</reference>
<reference key="7">
    <citation type="journal article" date="1994" name="J. Biol. Chem.">
        <title>Purification and properties of a protein that binds to the C-terminal coding region of human c-myc mRNA.</title>
        <authorList>
            <person name="Prokipcak R.D."/>
            <person name="Herrick D.J."/>
            <person name="Ross J."/>
        </authorList>
    </citation>
    <scope>FUNCTION</scope>
    <scope>RNA-BINDING</scope>
</reference>
<reference key="8">
    <citation type="journal article" date="2000" name="J. Biol. Chem.">
        <title>H19 RNA binds four molecules of insulin-like growth factor II mRNA-binding protein.</title>
        <authorList>
            <person name="Runge S."/>
            <person name="Nielsen F.C."/>
            <person name="Nielsen J."/>
            <person name="Lykke-Andersen J."/>
            <person name="Wewer U.M."/>
            <person name="Christiansen J."/>
        </authorList>
    </citation>
    <scope>FUNCTION</scope>
    <scope>SUBCELLULAR LOCATION</scope>
    <scope>RNA-BINDING</scope>
</reference>
<reference key="9">
    <citation type="journal article" date="2003" name="Biochem. J.">
        <title>Nuclear transit of human zipcode-binding protein IMP1.</title>
        <authorList>
            <person name="Nielsen J."/>
            <person name="Adolph S.K."/>
            <person name="Rajpert-De Meyts E."/>
            <person name="Lykke-Andersen J."/>
            <person name="Koch G."/>
            <person name="Christiansen J."/>
            <person name="Nielsen F.C."/>
        </authorList>
    </citation>
    <scope>SUBCELLULAR LOCATION</scope>
    <scope>TISSUE SPECIFICITY</scope>
    <scope>MUTAGENESIS OF 213-LYS-GLU-214; 294-LYS-GLU-295 AND 423-LYS-LYS-424</scope>
</reference>
<reference key="10">
    <citation type="journal article" date="2004" name="EMBO J.">
        <title>Visualization of RNA-protein interactions in living cells: FMRP and IMP1 interact on mRNAs.</title>
        <authorList>
            <person name="Rackham O."/>
            <person name="Brown C.M."/>
        </authorList>
    </citation>
    <scope>INTERACTION WITH FMR1</scope>
    <scope>RNA-BINDING</scope>
    <scope>SUBCELLULAR LOCATION</scope>
</reference>
<reference key="11">
    <citation type="journal article" date="2004" name="Nucleic Acids Res.">
        <title>Sequential dimerization of human zipcode-binding protein IMP1 on RNA: a cooperative mechanism providing RNP stability.</title>
        <authorList>
            <person name="Nielsen J."/>
            <person name="Kristensen M.A."/>
            <person name="Willemoes M."/>
            <person name="Nielsen F.C."/>
            <person name="Christiansen J."/>
        </authorList>
    </citation>
    <scope>SUBUNIT</scope>
    <scope>RNA-BINDING</scope>
</reference>
<reference key="12">
    <citation type="journal article" date="2005" name="Reproduction">
        <title>Expression of IGF-II mRNA-binding proteins (IMPs) in gonads and testicular cancer.</title>
        <authorList>
            <person name="Hammer N.A."/>
            <person name="Hansen T.O."/>
            <person name="Byskov A.G."/>
            <person name="Rajpert-De Meyts E."/>
            <person name="Groendahl M.L."/>
            <person name="Bredkjaer H.E."/>
            <person name="Wewer U.M."/>
            <person name="Christiansen J."/>
            <person name="Nielsen F.C."/>
        </authorList>
    </citation>
    <scope>TISSUE SPECIFICITY</scope>
</reference>
<reference key="13">
    <citation type="journal article" date="2006" name="Cell">
        <title>Global, in vivo, and site-specific phosphorylation dynamics in signaling networks.</title>
        <authorList>
            <person name="Olsen J.V."/>
            <person name="Blagoev B."/>
            <person name="Gnad F."/>
            <person name="Macek B."/>
            <person name="Kumar C."/>
            <person name="Mortensen P."/>
            <person name="Mann M."/>
        </authorList>
    </citation>
    <scope>PHOSPHORYLATION [LARGE SCALE ANALYSIS] AT SER-181</scope>
    <scope>IDENTIFICATION BY MASS SPECTROMETRY [LARGE SCALE ANALYSIS]</scope>
    <source>
        <tissue>Cervix carcinoma</tissue>
    </source>
</reference>
<reference key="14">
    <citation type="journal article" date="2006" name="EMBO J.">
        <title>RNA-binding IMPs promote cell adhesion and invadopodia formation.</title>
        <authorList>
            <person name="Vikesaa J."/>
            <person name="Hansen T.V."/>
            <person name="Joenson L."/>
            <person name="Borup R."/>
            <person name="Wewer U.M."/>
            <person name="Christiansen J."/>
            <person name="Nielsen F.C."/>
        </authorList>
    </citation>
    <scope>FUNCTION</scope>
    <scope>RNA-BINDING</scope>
    <scope>SUBCELLULAR LOCATION</scope>
</reference>
<reference key="15">
    <citation type="journal article" date="2006" name="FEBS J.">
        <title>IMP1 interacts with poly(A)-binding protein (PABP) and the autoregulatory translational control element of PABP-mRNA through the KH III-IV domain.</title>
        <authorList>
            <person name="Patel G.P."/>
            <person name="Bag J."/>
        </authorList>
    </citation>
    <scope>HOMODIMERIZATION</scope>
    <scope>INTERACTION WITH PABPC1</scope>
    <scope>RNA-BINDING</scope>
</reference>
<reference key="16">
    <citation type="journal article" date="2006" name="J. Cell Biol.">
        <title>ZBP1 regulates mRNA stability during cellular stress.</title>
        <authorList>
            <person name="Stoehr N."/>
            <person name="Lederer M."/>
            <person name="Reinke C."/>
            <person name="Meyer S."/>
            <person name="Hatzfeld M."/>
            <person name="Singer R.H."/>
            <person name="Huettelmaier S."/>
        </authorList>
    </citation>
    <scope>FUNCTION</scope>
    <scope>RNA-BINDING</scope>
    <scope>SUBCELLULAR LOCATION</scope>
</reference>
<reference key="17">
    <citation type="journal article" date="2006" name="Nat. Biotechnol.">
        <title>A probability-based approach for high-throughput protein phosphorylation analysis and site localization.</title>
        <authorList>
            <person name="Beausoleil S.A."/>
            <person name="Villen J."/>
            <person name="Gerber S.A."/>
            <person name="Rush J."/>
            <person name="Gygi S.P."/>
        </authorList>
    </citation>
    <scope>PHOSPHORYLATION [LARGE SCALE ANALYSIS] AT SER-181</scope>
    <scope>IDENTIFICATION BY MASS SPECTROMETRY [LARGE SCALE ANALYSIS]</scope>
    <source>
        <tissue>Cervix carcinoma</tissue>
    </source>
</reference>
<reference key="18">
    <citation type="journal article" date="2006" name="Nature">
        <title>CRD-BP mediates stabilization of betaTrCP1 and c-myc mRNA in response to beta-catenin signaling.</title>
        <authorList>
            <person name="Noubissi F.K."/>
            <person name="Elcheva I."/>
            <person name="Bhatia N."/>
            <person name="Shakoori A."/>
            <person name="Ougolkov A."/>
            <person name="Liu J."/>
            <person name="Minamoto T."/>
            <person name="Ross J."/>
            <person name="Fuchs S.Y."/>
            <person name="Spiegelman V.S."/>
        </authorList>
    </citation>
    <scope>FUNCTION</scope>
    <scope>RNA-BINDING</scope>
    <scope>INDUCTION</scope>
</reference>
<reference key="19">
    <citation type="journal article" date="2007" name="Clin. Cancer Res.">
        <title>Increased expression of insulin-like growth factor-II messenger RNA-binding protein 1 is associated with tumor progression in patients with lung cancer.</title>
        <authorList>
            <person name="Kato T."/>
            <person name="Hayama S."/>
            <person name="Yamabuki T."/>
            <person name="Ishikawa N."/>
            <person name="Miyamoto M."/>
            <person name="Ito T."/>
            <person name="Tsuchiya E."/>
            <person name="Kondo S."/>
            <person name="Nakamura Y."/>
            <person name="Daigo Y."/>
        </authorList>
    </citation>
    <scope>FUNCTION</scope>
    <scope>TISSUE SPECIFICITY</scope>
</reference>
<reference key="20">
    <citation type="journal article" date="2007" name="EMBO Rep.">
        <title>Proteomic and functional analysis of Argonaute-containing mRNA-protein complexes in human cells.</title>
        <authorList>
            <person name="Hoeck J."/>
            <person name="Weinmann L."/>
            <person name="Ender C."/>
            <person name="Ruedel S."/>
            <person name="Kremmer E."/>
            <person name="Raabe M."/>
            <person name="Urlaub H."/>
            <person name="Meister G."/>
        </authorList>
    </citation>
    <scope>INTERACTION WITH AGO1 AND AGO2</scope>
</reference>
<reference key="21">
    <citation type="journal article" date="2007" name="Mol. Cell. Biol.">
        <title>ZBP2 facilitates binding of ZBP1 to beta-actin mRNA during transcription.</title>
        <authorList>
            <person name="Pan F."/>
            <person name="Huettelmaier S."/>
            <person name="Singer R.H."/>
            <person name="Gu W."/>
        </authorList>
    </citation>
    <scope>FUNCTION</scope>
</reference>
<reference key="22">
    <citation type="journal article" date="2007" name="Mol. Cell. Proteomics">
        <title>Molecular composition of IMP1 ribonucleoprotein granules.</title>
        <authorList>
            <person name="Joeson L."/>
            <person name="Vikesaa J."/>
            <person name="Krogh A."/>
            <person name="Nielsen L.K."/>
            <person name="Hansen T."/>
            <person name="Borup R."/>
            <person name="Johnsen A.H."/>
            <person name="Christiansen J."/>
            <person name="Nielsen F.C."/>
        </authorList>
    </citation>
    <scope>IDENTIFICATION IN A MRNP GRANULE COMPLEX</scope>
    <scope>INTERACTION WITH DHX9; ELAVL2; HNRNPA2B1; HNRNPC; HNRNPH1; HNRNPU; IGF2BP2; IGF2BP3; ILF2; PABPC1 AND YBX1</scope>
    <scope>RNA-BINDING</scope>
    <scope>SUBCELLULAR LOCATION</scope>
    <scope>IDENTIFICATION BY MASS SPECTROMETRY</scope>
</reference>
<reference key="23">
    <citation type="journal article" date="2008" name="J. Virol.">
        <title>Insulin-like growth factor II mRNA binding protein 1 associates with Gag protein of human immunodeficiency virus type 1, and its overexpression affects virus assembly.</title>
        <authorList>
            <person name="Zhou Y."/>
            <person name="Rong L."/>
            <person name="Lu J."/>
            <person name="Pan Q."/>
            <person name="Liang C."/>
        </authorList>
    </citation>
    <scope>FUNCTION</scope>
    <scope>INTERACTION WITH HIV-1 GAG</scope>
    <scope>SUBCELLULAR LOCATION</scope>
</reference>
<reference key="24">
    <citation type="journal article" date="2008" name="Proc. Natl. Acad. Sci. U.S.A.">
        <title>A quantitative atlas of mitotic phosphorylation.</title>
        <authorList>
            <person name="Dephoure N."/>
            <person name="Zhou C."/>
            <person name="Villen J."/>
            <person name="Beausoleil S.A."/>
            <person name="Bakalarski C.E."/>
            <person name="Elledge S.J."/>
            <person name="Gygi S.P."/>
        </authorList>
    </citation>
    <scope>IDENTIFICATION BY MASS SPECTROMETRY [LARGE SCALE ANALYSIS]</scope>
    <source>
        <tissue>Cervix carcinoma</tissue>
    </source>
</reference>
<reference key="25">
    <citation type="journal article" date="2009" name="Anal. Chem.">
        <title>Lys-N and trypsin cover complementary parts of the phosphoproteome in a refined SCX-based approach.</title>
        <authorList>
            <person name="Gauci S."/>
            <person name="Helbig A.O."/>
            <person name="Slijper M."/>
            <person name="Krijgsveld J."/>
            <person name="Heck A.J."/>
            <person name="Mohammed S."/>
        </authorList>
    </citation>
    <scope>IDENTIFICATION BY MASS SPECTROMETRY [LARGE SCALE ANALYSIS]</scope>
</reference>
<reference key="26">
    <citation type="journal article" date="2009" name="Mol. Cell">
        <title>CRD-BP protects the coding region of betaTrCP1 mRNA from miR-183-mediated degradation.</title>
        <authorList>
            <person name="Elcheva I."/>
            <person name="Goswami S."/>
            <person name="Noubissi F.K."/>
            <person name="Spiegelman V.S."/>
        </authorList>
    </citation>
    <scope>FUNCTION</scope>
    <scope>RNA-BINDING</scope>
</reference>
<reference key="27">
    <citation type="journal article" date="2009" name="RNA">
        <title>Control of c-myc mRNA stability by IGF2BP1-associated cytoplasmic RNPs.</title>
        <authorList>
            <person name="Weidensdorfer D."/>
            <person name="Stoehr N."/>
            <person name="Baude A."/>
            <person name="Lederer M."/>
            <person name="Koehn M."/>
            <person name="Schierhorn A."/>
            <person name="Buchmeier S."/>
            <person name="Wahle E."/>
            <person name="Huettelmaiery S."/>
        </authorList>
    </citation>
    <scope>FUNCTION</scope>
    <scope>COMPONENT OF THE CRD-MEDIATED MRNA STABILIZATION COMPLEX</scope>
    <scope>IDENTIFICATION IN A MRNP COMPLEX</scope>
    <scope>SUBCELLULAR LOCATION</scope>
    <scope>IDENTIFICATION BY MASS SPECTROMETRY</scope>
</reference>
<reference key="28">
    <citation type="journal article" date="2009" name="RNA">
        <title>IGF2BP1 enhances HCV IRES-mediated translation initiation via the 3'UTR.</title>
        <authorList>
            <person name="Weinlich S."/>
            <person name="Huettelmaier S."/>
            <person name="Schierhorn A."/>
            <person name="Behrens S.-E."/>
            <person name="Ostareck-Lederer A."/>
            <person name="Ostareck D.H."/>
        </authorList>
    </citation>
    <scope>FUNCTION</scope>
    <scope>RNA-BINDING</scope>
    <scope>IDENTIFICATION IN A HCV IRES-MEDIATED TRANSLATION COMPLEX</scope>
</reference>
<reference key="29">
    <citation type="journal article" date="2010" name="Sci. Signal.">
        <title>Quantitative phosphoproteomics reveals widespread full phosphorylation site occupancy during mitosis.</title>
        <authorList>
            <person name="Olsen J.V."/>
            <person name="Vermeulen M."/>
            <person name="Santamaria A."/>
            <person name="Kumar C."/>
            <person name="Miller M.L."/>
            <person name="Jensen L.J."/>
            <person name="Gnad F."/>
            <person name="Cox J."/>
            <person name="Jensen T.S."/>
            <person name="Nigg E.A."/>
            <person name="Brunak S."/>
            <person name="Mann M."/>
        </authorList>
    </citation>
    <scope>PHOSPHORYLATION [LARGE SCALE ANALYSIS] AT SER-181</scope>
    <scope>IDENTIFICATION BY MASS SPECTROMETRY [LARGE SCALE ANALYSIS]</scope>
    <source>
        <tissue>Cervix carcinoma</tissue>
    </source>
</reference>
<reference key="30">
    <citation type="journal article" date="2011" name="BMC Syst. Biol.">
        <title>Initial characterization of the human central proteome.</title>
        <authorList>
            <person name="Burkard T.R."/>
            <person name="Planyavsky M."/>
            <person name="Kaupe I."/>
            <person name="Breitwieser F.P."/>
            <person name="Buerckstuemmer T."/>
            <person name="Bennett K.L."/>
            <person name="Superti-Furga G."/>
            <person name="Colinge J."/>
        </authorList>
    </citation>
    <scope>IDENTIFICATION BY MASS SPECTROMETRY [LARGE SCALE ANALYSIS]</scope>
</reference>
<reference key="31">
    <citation type="journal article" date="2012" name="Genes Dev.">
        <title>IGF2BP1 promotes cell migration by regulating MK5 and PTEN signaling.</title>
        <authorList>
            <person name="Stohr N."/>
            <person name="Kohn M."/>
            <person name="Lederer M."/>
            <person name="Glass M."/>
            <person name="Reinke C."/>
            <person name="Singer R.H."/>
            <person name="Huttelmaier S."/>
        </authorList>
    </citation>
    <scope>FUNCTION IN CELL MIGRATION</scope>
</reference>
<reference key="32">
    <citation type="journal article" date="2013" name="Biol. Chem.">
        <title>Subcellular localization and RNP formation of IGF2BPs (IGF2 mRNA-binding proteins) is modulated by distinct RNA-binding domains.</title>
        <authorList>
            <person name="Wachter K."/>
            <person name="Kohn M."/>
            <person name="Stohr N."/>
            <person name="Huttelmaier S."/>
        </authorList>
    </citation>
    <scope>INTERACTION WITH ELAVL1; DHX9 AND HNRNPU</scope>
</reference>
<reference key="33">
    <citation type="journal article" date="2013" name="Cell. Mol. Life Sci.">
        <title>Insulin-like growth factor 2 mRNA-binding proteins (IGF2BPs): post-transcriptional drivers of cancer progression?</title>
        <authorList>
            <person name="Bell J.L."/>
            <person name="Wachter K."/>
            <person name="Muhleck B."/>
            <person name="Pazaitis N."/>
            <person name="Kohn M."/>
            <person name="Lederer M."/>
            <person name="Huttelmaier S."/>
        </authorList>
    </citation>
    <scope>REVIEW</scope>
</reference>
<reference key="34">
    <citation type="journal article" date="2013" name="J. Proteome Res.">
        <title>Toward a comprehensive characterization of a human cancer cell phosphoproteome.</title>
        <authorList>
            <person name="Zhou H."/>
            <person name="Di Palma S."/>
            <person name="Preisinger C."/>
            <person name="Peng M."/>
            <person name="Polat A.N."/>
            <person name="Heck A.J."/>
            <person name="Mohammed S."/>
        </authorList>
    </citation>
    <scope>PHOSPHORYLATION [LARGE SCALE ANALYSIS] AT SER-12; SER-73; SER-181 AND THR-528</scope>
    <scope>IDENTIFICATION BY MASS SPECTROMETRY [LARGE SCALE ANALYSIS]</scope>
    <source>
        <tissue>Cervix carcinoma</tissue>
        <tissue>Erythroleukemia</tissue>
    </source>
</reference>
<reference key="35">
    <citation type="journal article" date="2018" name="Nat. Cell Biol.">
        <title>Recognition of RNA N6-methyladenosine by IGF2BP proteins enhances mRNA stability and translation.</title>
        <authorList>
            <person name="Huang H."/>
            <person name="Weng H."/>
            <person name="Sun W."/>
            <person name="Qin X."/>
            <person name="Shi H."/>
            <person name="Wu H."/>
            <person name="Zhao B.S."/>
            <person name="Mesquita A."/>
            <person name="Liu C."/>
            <person name="Yuan C.L."/>
            <person name="Hu Y.C."/>
            <person name="Huettelmaier S."/>
            <person name="Skibbe J.R."/>
            <person name="Su R."/>
            <person name="Deng X."/>
            <person name="Dong L."/>
            <person name="Sun M."/>
            <person name="Li C."/>
            <person name="Nachtergaele S."/>
            <person name="Wang Y."/>
            <person name="Hu C."/>
            <person name="Ferchen K."/>
            <person name="Greis K.D."/>
            <person name="Jiang X."/>
            <person name="Wei M."/>
            <person name="Qu L."/>
            <person name="Guan J.L."/>
            <person name="He C."/>
            <person name="Yang J."/>
            <person name="Chen J."/>
        </authorList>
    </citation>
    <scope>FUNCTION</scope>
    <scope>INTERACTION WITH ELAVL1; MATR3 AND PABPC1</scope>
    <scope>SUBCELLULAR LOCATION</scope>
    <scope>ROLE OF KH DOMAINS</scope>
    <scope>MUTAGENESIS OF LYS-213; LYS-294; 423-LYS-LYS-424 AND 505-LYS-GLY-506</scope>
    <scope>IDENTIFICATION BY MASS SPECTROMETRY</scope>
</reference>
<reference key="36">
    <citation type="journal article" date="2020" name="Nat. Commun.">
        <title>An oncopeptide regulates m6A recognition by the m6A reader IGF2BP1 and tumorigenesis.</title>
        <authorList>
            <person name="Zhu S."/>
            <person name="Wang J.Z."/>
            <person name="Chen D."/>
            <person name="He Y.T."/>
            <person name="Meng N."/>
            <person name="Chen M."/>
            <person name="Lu R.X."/>
            <person name="Chen X.H."/>
            <person name="Zhang X.L."/>
            <person name="Yan G.R."/>
        </authorList>
    </citation>
    <scope>FUNCTION</scope>
    <scope>INTERACTION WITH RBRP; ELAVL1; MATR3 AND PABPC1</scope>
    <scope>MUTAGENESIS OF 423-LYS-LYS-424 AND 505-LYS-GLY-506</scope>
</reference>
<reference key="37">
    <citation type="journal article" date="2010" name="Genes Dev.">
        <title>ZBP1 recognition of beta-actin zipcode induces RNA looping.</title>
        <authorList>
            <person name="Chao J.A."/>
            <person name="Patskovsky Y."/>
            <person name="Patel V."/>
            <person name="Levy M."/>
            <person name="Almo S.C."/>
            <person name="Singer R.H."/>
        </authorList>
    </citation>
    <scope>X-RAY CRYSTALLOGRAPHY (2.75 ANGSTROMS) OF 404-566</scope>
    <scope>FUNCTION</scope>
    <scope>RNA-BINDING</scope>
    <scope>DOMAIN</scope>
</reference>
<name>IF2B1_HUMAN</name>
<keyword id="KW-0002">3D-structure</keyword>
<keyword id="KW-0025">Alternative splicing</keyword>
<keyword id="KW-0966">Cell projection</keyword>
<keyword id="KW-0963">Cytoplasm</keyword>
<keyword id="KW-0903">Direct protein sequencing</keyword>
<keyword id="KW-0509">mRNA transport</keyword>
<keyword id="KW-0539">Nucleus</keyword>
<keyword id="KW-0597">Phosphoprotein</keyword>
<keyword id="KW-1267">Proteomics identification</keyword>
<keyword id="KW-1185">Reference proteome</keyword>
<keyword id="KW-0677">Repeat</keyword>
<keyword id="KW-0694">RNA-binding</keyword>
<keyword id="KW-0770">Synapse</keyword>
<keyword id="KW-0810">Translation regulation</keyword>
<keyword id="KW-0813">Transport</keyword>
<accession>Q9NZI8</accession>
<accession>C9JT33</accession>
<dbReference type="EMBL" id="AF198254">
    <property type="protein sequence ID" value="AAF37203.1"/>
    <property type="molecule type" value="mRNA"/>
</dbReference>
<dbReference type="EMBL" id="DQ227344">
    <property type="protein sequence ID" value="ABB46294.1"/>
    <property type="molecule type" value="mRNA"/>
</dbReference>
<dbReference type="EMBL" id="AC091133">
    <property type="status" value="NOT_ANNOTATED_CDS"/>
    <property type="molecule type" value="Genomic_DNA"/>
</dbReference>
<dbReference type="EMBL" id="AC105030">
    <property type="status" value="NOT_ANNOTATED_CDS"/>
    <property type="molecule type" value="Genomic_DNA"/>
</dbReference>
<dbReference type="CCDS" id="CCDS11543.1">
    <molecule id="Q9NZI8-1"/>
</dbReference>
<dbReference type="CCDS" id="CCDS54138.1">
    <molecule id="Q9NZI8-2"/>
</dbReference>
<dbReference type="RefSeq" id="NP_001153895.1">
    <molecule id="Q9NZI8-2"/>
    <property type="nucleotide sequence ID" value="NM_001160423.2"/>
</dbReference>
<dbReference type="RefSeq" id="NP_006537.3">
    <molecule id="Q9NZI8-1"/>
    <property type="nucleotide sequence ID" value="NM_006546.3"/>
</dbReference>
<dbReference type="RefSeq" id="XP_047291095.1">
    <molecule id="Q9NZI8-1"/>
    <property type="nucleotide sequence ID" value="XM_047435139.1"/>
</dbReference>
<dbReference type="RefSeq" id="XP_054170702.1">
    <molecule id="Q9NZI8-1"/>
    <property type="nucleotide sequence ID" value="XM_054314727.1"/>
</dbReference>
<dbReference type="PDB" id="3KRM">
    <property type="method" value="X-ray"/>
    <property type="resolution" value="2.75 A"/>
    <property type="chains" value="A/B/C=404-566"/>
</dbReference>
<dbReference type="PDB" id="6QEY">
    <property type="method" value="X-ray"/>
    <property type="resolution" value="2.20 A"/>
    <property type="chains" value="A=194-369"/>
</dbReference>
<dbReference type="PDBsum" id="3KRM"/>
<dbReference type="PDBsum" id="6QEY"/>
<dbReference type="SMR" id="Q9NZI8"/>
<dbReference type="BioGRID" id="115886">
    <property type="interactions" value="529"/>
</dbReference>
<dbReference type="ComplexPortal" id="CPX-1080">
    <property type="entry name" value="CRD-mediated mRNA stability complex"/>
</dbReference>
<dbReference type="CORUM" id="Q9NZI8"/>
<dbReference type="DIP" id="DIP-38139N"/>
<dbReference type="FunCoup" id="Q9NZI8">
    <property type="interactions" value="1254"/>
</dbReference>
<dbReference type="IntAct" id="Q9NZI8">
    <property type="interactions" value="196"/>
</dbReference>
<dbReference type="MINT" id="Q9NZI8"/>
<dbReference type="STRING" id="9606.ENSP00000290341"/>
<dbReference type="BindingDB" id="Q9NZI8"/>
<dbReference type="ChEMBL" id="CHEMBL5465263"/>
<dbReference type="GlyGen" id="Q9NZI8">
    <property type="glycosylation" value="2 sites, 1 N-linked glycan (1 site), 1 O-linked glycan (1 site)"/>
</dbReference>
<dbReference type="iPTMnet" id="Q9NZI8"/>
<dbReference type="PhosphoSitePlus" id="Q9NZI8"/>
<dbReference type="SwissPalm" id="Q9NZI8"/>
<dbReference type="BioMuta" id="IGF2BP1"/>
<dbReference type="DMDM" id="296434536"/>
<dbReference type="jPOST" id="Q9NZI8"/>
<dbReference type="MassIVE" id="Q9NZI8"/>
<dbReference type="PaxDb" id="9606-ENSP00000290341"/>
<dbReference type="PeptideAtlas" id="Q9NZI8"/>
<dbReference type="ProteomicsDB" id="11549"/>
<dbReference type="ProteomicsDB" id="83410">
    <molecule id="Q9NZI8-1"/>
</dbReference>
<dbReference type="Pumba" id="Q9NZI8"/>
<dbReference type="TopDownProteomics" id="Q9NZI8-1">
    <molecule id="Q9NZI8-1"/>
</dbReference>
<dbReference type="Antibodypedia" id="17915">
    <property type="antibodies" value="321 antibodies from 36 providers"/>
</dbReference>
<dbReference type="DNASU" id="10642"/>
<dbReference type="Ensembl" id="ENST00000290341.8">
    <molecule id="Q9NZI8-1"/>
    <property type="protein sequence ID" value="ENSP00000290341.3"/>
    <property type="gene ID" value="ENSG00000159217.10"/>
</dbReference>
<dbReference type="Ensembl" id="ENST00000431824.2">
    <molecule id="Q9NZI8-2"/>
    <property type="protein sequence ID" value="ENSP00000389135.2"/>
    <property type="gene ID" value="ENSG00000159217.10"/>
</dbReference>
<dbReference type="GeneID" id="10642"/>
<dbReference type="KEGG" id="hsa:10642"/>
<dbReference type="MANE-Select" id="ENST00000290341.8">
    <property type="protein sequence ID" value="ENSP00000290341.3"/>
    <property type="RefSeq nucleotide sequence ID" value="NM_006546.4"/>
    <property type="RefSeq protein sequence ID" value="NP_006537.3"/>
</dbReference>
<dbReference type="UCSC" id="uc002iom.4">
    <molecule id="Q9NZI8-1"/>
    <property type="organism name" value="human"/>
</dbReference>
<dbReference type="AGR" id="HGNC:28866"/>
<dbReference type="CTD" id="10642"/>
<dbReference type="DisGeNET" id="10642"/>
<dbReference type="GeneCards" id="IGF2BP1"/>
<dbReference type="HGNC" id="HGNC:28866">
    <property type="gene designation" value="IGF2BP1"/>
</dbReference>
<dbReference type="HPA" id="ENSG00000159217">
    <property type="expression patterns" value="Group enriched (placenta, testis)"/>
</dbReference>
<dbReference type="MIM" id="608288">
    <property type="type" value="gene"/>
</dbReference>
<dbReference type="neXtProt" id="NX_Q9NZI8"/>
<dbReference type="OpenTargets" id="ENSG00000159217"/>
<dbReference type="PharmGKB" id="PA143485501"/>
<dbReference type="VEuPathDB" id="HostDB:ENSG00000159217"/>
<dbReference type="eggNOG" id="KOG2193">
    <property type="taxonomic scope" value="Eukaryota"/>
</dbReference>
<dbReference type="GeneTree" id="ENSGT00940000160427"/>
<dbReference type="HOGENOM" id="CLU_020744_1_0_1"/>
<dbReference type="InParanoid" id="Q9NZI8"/>
<dbReference type="OMA" id="AKDTKTX"/>
<dbReference type="OrthoDB" id="752362at2759"/>
<dbReference type="PAN-GO" id="Q9NZI8">
    <property type="GO annotations" value="7 GO annotations based on evolutionary models"/>
</dbReference>
<dbReference type="PhylomeDB" id="Q9NZI8"/>
<dbReference type="TreeFam" id="TF320229"/>
<dbReference type="PathwayCommons" id="Q9NZI8"/>
<dbReference type="Reactome" id="R-HSA-428359">
    <property type="pathway name" value="Insulin-like Growth Factor-2 mRNA Binding Proteins (IGF2BPs/IMPs/VICKZs) bind RNA"/>
</dbReference>
<dbReference type="Reactome" id="R-HSA-5687128">
    <property type="pathway name" value="MAPK6/MAPK4 signaling"/>
</dbReference>
<dbReference type="SignaLink" id="Q9NZI8"/>
<dbReference type="SIGNOR" id="Q9NZI8"/>
<dbReference type="BioGRID-ORCS" id="10642">
    <property type="hits" value="35 hits in 1167 CRISPR screens"/>
</dbReference>
<dbReference type="CD-CODE" id="232F8A39">
    <property type="entry name" value="P-body"/>
</dbReference>
<dbReference type="CD-CODE" id="DEE660B4">
    <property type="entry name" value="Stress granule"/>
</dbReference>
<dbReference type="CD-CODE" id="F85A2E29">
    <property type="entry name" value="IMP1 RNP granule"/>
</dbReference>
<dbReference type="ChiTaRS" id="IGF2BP1">
    <property type="organism name" value="human"/>
</dbReference>
<dbReference type="EvolutionaryTrace" id="Q9NZI8"/>
<dbReference type="GeneWiki" id="IGF2BP1"/>
<dbReference type="GenomeRNAi" id="10642"/>
<dbReference type="Pharos" id="Q9NZI8">
    <property type="development level" value="Tbio"/>
</dbReference>
<dbReference type="PRO" id="PR:Q9NZI8"/>
<dbReference type="Proteomes" id="UP000005640">
    <property type="component" value="Chromosome 17"/>
</dbReference>
<dbReference type="RNAct" id="Q9NZI8">
    <property type="molecule type" value="protein"/>
</dbReference>
<dbReference type="Bgee" id="ENSG00000159217">
    <property type="expression patterns" value="Expressed in male germ line stem cell (sensu Vertebrata) in testis and 127 other cell types or tissues"/>
</dbReference>
<dbReference type="GO" id="GO:0070937">
    <property type="term" value="C:CRD-mediated mRNA stability complex"/>
    <property type="evidence" value="ECO:0000314"/>
    <property type="project" value="UniProtKB"/>
</dbReference>
<dbReference type="GO" id="GO:0005737">
    <property type="term" value="C:cytoplasm"/>
    <property type="evidence" value="ECO:0000314"/>
    <property type="project" value="UniProtKB"/>
</dbReference>
<dbReference type="GO" id="GO:0010494">
    <property type="term" value="C:cytoplasmic stress granule"/>
    <property type="evidence" value="ECO:0000314"/>
    <property type="project" value="UniProtKB"/>
</dbReference>
<dbReference type="GO" id="GO:0005829">
    <property type="term" value="C:cytosol"/>
    <property type="evidence" value="ECO:0000314"/>
    <property type="project" value="HPA"/>
</dbReference>
<dbReference type="GO" id="GO:0043197">
    <property type="term" value="C:dendritic spine"/>
    <property type="evidence" value="ECO:0007669"/>
    <property type="project" value="UniProtKB-SubCell"/>
</dbReference>
<dbReference type="GO" id="GO:0030175">
    <property type="term" value="C:filopodium"/>
    <property type="evidence" value="ECO:0007669"/>
    <property type="project" value="UniProtKB-SubCell"/>
</dbReference>
<dbReference type="GO" id="GO:0030426">
    <property type="term" value="C:growth cone"/>
    <property type="evidence" value="ECO:0007669"/>
    <property type="project" value="UniProtKB-SubCell"/>
</dbReference>
<dbReference type="GO" id="GO:0030027">
    <property type="term" value="C:lamellipodium"/>
    <property type="evidence" value="ECO:0007669"/>
    <property type="project" value="UniProtKB-SubCell"/>
</dbReference>
<dbReference type="GO" id="GO:0043025">
    <property type="term" value="C:neuronal cell body"/>
    <property type="evidence" value="ECO:0007669"/>
    <property type="project" value="Ensembl"/>
</dbReference>
<dbReference type="GO" id="GO:0005654">
    <property type="term" value="C:nucleoplasm"/>
    <property type="evidence" value="ECO:0000314"/>
    <property type="project" value="HPA"/>
</dbReference>
<dbReference type="GO" id="GO:0005634">
    <property type="term" value="C:nucleus"/>
    <property type="evidence" value="ECO:0000318"/>
    <property type="project" value="GO_Central"/>
</dbReference>
<dbReference type="GO" id="GO:0000932">
    <property type="term" value="C:P-body"/>
    <property type="evidence" value="ECO:0000314"/>
    <property type="project" value="UniProtKB"/>
</dbReference>
<dbReference type="GO" id="GO:0048471">
    <property type="term" value="C:perinuclear region of cytoplasm"/>
    <property type="evidence" value="ECO:0007669"/>
    <property type="project" value="UniProtKB-SubCell"/>
</dbReference>
<dbReference type="GO" id="GO:1990904">
    <property type="term" value="C:ribonucleoprotein complex"/>
    <property type="evidence" value="ECO:0000314"/>
    <property type="project" value="UniProtKB"/>
</dbReference>
<dbReference type="GO" id="GO:0003730">
    <property type="term" value="F:mRNA 3'-UTR binding"/>
    <property type="evidence" value="ECO:0000314"/>
    <property type="project" value="UniProtKB"/>
</dbReference>
<dbReference type="GO" id="GO:0048027">
    <property type="term" value="F:mRNA 5'-UTR binding"/>
    <property type="evidence" value="ECO:0000314"/>
    <property type="project" value="BHF-UCL"/>
</dbReference>
<dbReference type="GO" id="GO:0003729">
    <property type="term" value="F:mRNA binding"/>
    <property type="evidence" value="ECO:0000314"/>
    <property type="project" value="UniProtKB"/>
</dbReference>
<dbReference type="GO" id="GO:1990247">
    <property type="term" value="F:N6-methyladenosine-containing RNA reader activity"/>
    <property type="evidence" value="ECO:0000314"/>
    <property type="project" value="UniProtKB"/>
</dbReference>
<dbReference type="GO" id="GO:0003723">
    <property type="term" value="F:RNA binding"/>
    <property type="evidence" value="ECO:0007005"/>
    <property type="project" value="UniProtKB"/>
</dbReference>
<dbReference type="GO" id="GO:0045182">
    <property type="term" value="F:translation regulator activity"/>
    <property type="evidence" value="ECO:0000314"/>
    <property type="project" value="BHF-UCL"/>
</dbReference>
<dbReference type="GO" id="GO:0070934">
    <property type="term" value="P:CRD-mediated mRNA stabilization"/>
    <property type="evidence" value="ECO:0000314"/>
    <property type="project" value="UniProtKB"/>
</dbReference>
<dbReference type="GO" id="GO:0140059">
    <property type="term" value="P:dendrite arborization"/>
    <property type="evidence" value="ECO:0007669"/>
    <property type="project" value="Ensembl"/>
</dbReference>
<dbReference type="GO" id="GO:0051028">
    <property type="term" value="P:mRNA transport"/>
    <property type="evidence" value="ECO:0007669"/>
    <property type="project" value="UniProtKB-KW"/>
</dbReference>
<dbReference type="GO" id="GO:1900152">
    <property type="term" value="P:negative regulation of nuclear-transcribed mRNA catabolic process, deadenylation-dependent decay"/>
    <property type="evidence" value="ECO:0000314"/>
    <property type="project" value="ComplexPortal"/>
</dbReference>
<dbReference type="GO" id="GO:0017148">
    <property type="term" value="P:negative regulation of translation"/>
    <property type="evidence" value="ECO:0000314"/>
    <property type="project" value="BHF-UCL"/>
</dbReference>
<dbReference type="GO" id="GO:0007399">
    <property type="term" value="P:nervous system development"/>
    <property type="evidence" value="ECO:0000318"/>
    <property type="project" value="GO_Central"/>
</dbReference>
<dbReference type="GO" id="GO:0097150">
    <property type="term" value="P:neuronal stem cell population maintenance"/>
    <property type="evidence" value="ECO:0007669"/>
    <property type="project" value="Ensembl"/>
</dbReference>
<dbReference type="GO" id="GO:0022013">
    <property type="term" value="P:pallium cell proliferation in forebrain"/>
    <property type="evidence" value="ECO:0007669"/>
    <property type="project" value="Ensembl"/>
</dbReference>
<dbReference type="GO" id="GO:2000767">
    <property type="term" value="P:positive regulation of cytoplasmic translation"/>
    <property type="evidence" value="ECO:0000314"/>
    <property type="project" value="ComplexPortal"/>
</dbReference>
<dbReference type="GO" id="GO:0001817">
    <property type="term" value="P:regulation of cytokine production"/>
    <property type="evidence" value="ECO:0000305"/>
    <property type="project" value="BHF-UCL"/>
</dbReference>
<dbReference type="GO" id="GO:0010610">
    <property type="term" value="P:regulation of mRNA stability involved in response to stress"/>
    <property type="evidence" value="ECO:0000315"/>
    <property type="project" value="UniProtKB"/>
</dbReference>
<dbReference type="CDD" id="cd22490">
    <property type="entry name" value="KH-I_IGF2BP1_rpt1"/>
    <property type="match status" value="1"/>
</dbReference>
<dbReference type="CDD" id="cd22493">
    <property type="entry name" value="KH-I_IGF2BP1_rpt2"/>
    <property type="match status" value="1"/>
</dbReference>
<dbReference type="CDD" id="cd22496">
    <property type="entry name" value="KH-I_IGF2BP1_rpt3"/>
    <property type="match status" value="1"/>
</dbReference>
<dbReference type="CDD" id="cd22499">
    <property type="entry name" value="KH-I_IGF2BP1_rpt4"/>
    <property type="match status" value="1"/>
</dbReference>
<dbReference type="CDD" id="cd12625">
    <property type="entry name" value="RRM1_IGF2BP1"/>
    <property type="match status" value="1"/>
</dbReference>
<dbReference type="CDD" id="cd12628">
    <property type="entry name" value="RRM2_IGF2BP1"/>
    <property type="match status" value="1"/>
</dbReference>
<dbReference type="FunFam" id="3.30.70.330:FF:000203">
    <property type="entry name" value="insulin-like growth factor 2 mRNA-binding protein 1"/>
    <property type="match status" value="1"/>
</dbReference>
<dbReference type="FunFam" id="3.30.310.210:FF:000001">
    <property type="entry name" value="insulin-like growth factor 2 mRNA-binding protein 1 isoform X1"/>
    <property type="match status" value="1"/>
</dbReference>
<dbReference type="FunFam" id="3.30.1370.10:FF:000026">
    <property type="entry name" value="Insulin-like growth factor 2 mRNA-binding protein 3"/>
    <property type="match status" value="1"/>
</dbReference>
<dbReference type="FunFam" id="3.30.1370.10:FF:000027">
    <property type="entry name" value="insulin-like growth factor 2 mRNA-binding protein 3 isoform X1"/>
    <property type="match status" value="1"/>
</dbReference>
<dbReference type="FunFam" id="3.30.70.330:FF:000099">
    <property type="entry name" value="insulin-like growth factor 2 mRNA-binding protein 3 isoform X1"/>
    <property type="match status" value="1"/>
</dbReference>
<dbReference type="Gene3D" id="3.30.310.210">
    <property type="match status" value="1"/>
</dbReference>
<dbReference type="Gene3D" id="3.30.70.330">
    <property type="match status" value="2"/>
</dbReference>
<dbReference type="Gene3D" id="3.30.1370.10">
    <property type="entry name" value="K Homology domain, type 1"/>
    <property type="match status" value="2"/>
</dbReference>
<dbReference type="InterPro" id="IPR034837">
    <property type="entry name" value="IGF2BP1_RRM1"/>
</dbReference>
<dbReference type="InterPro" id="IPR034842">
    <property type="entry name" value="IGF2BP1_RRM2"/>
</dbReference>
<dbReference type="InterPro" id="IPR004087">
    <property type="entry name" value="KH_dom"/>
</dbReference>
<dbReference type="InterPro" id="IPR004088">
    <property type="entry name" value="KH_dom_type_1"/>
</dbReference>
<dbReference type="InterPro" id="IPR036612">
    <property type="entry name" value="KH_dom_type_1_sf"/>
</dbReference>
<dbReference type="InterPro" id="IPR012677">
    <property type="entry name" value="Nucleotide-bd_a/b_plait_sf"/>
</dbReference>
<dbReference type="InterPro" id="IPR035979">
    <property type="entry name" value="RBD_domain_sf"/>
</dbReference>
<dbReference type="InterPro" id="IPR000504">
    <property type="entry name" value="RRM_dom"/>
</dbReference>
<dbReference type="PANTHER" id="PTHR10288">
    <property type="entry name" value="KH DOMAIN CONTAINING RNA BINDING PROTEIN"/>
    <property type="match status" value="1"/>
</dbReference>
<dbReference type="Pfam" id="PF00013">
    <property type="entry name" value="KH_1"/>
    <property type="match status" value="4"/>
</dbReference>
<dbReference type="Pfam" id="PF00076">
    <property type="entry name" value="RRM_1"/>
    <property type="match status" value="2"/>
</dbReference>
<dbReference type="SMART" id="SM00322">
    <property type="entry name" value="KH"/>
    <property type="match status" value="4"/>
</dbReference>
<dbReference type="SMART" id="SM00360">
    <property type="entry name" value="RRM"/>
    <property type="match status" value="2"/>
</dbReference>
<dbReference type="SUPFAM" id="SSF54791">
    <property type="entry name" value="Eukaryotic type KH-domain (KH-domain type I)"/>
    <property type="match status" value="4"/>
</dbReference>
<dbReference type="SUPFAM" id="SSF54928">
    <property type="entry name" value="RNA-binding domain, RBD"/>
    <property type="match status" value="1"/>
</dbReference>
<dbReference type="PROSITE" id="PS50084">
    <property type="entry name" value="KH_TYPE_1"/>
    <property type="match status" value="4"/>
</dbReference>
<dbReference type="PROSITE" id="PS50102">
    <property type="entry name" value="RRM"/>
    <property type="match status" value="2"/>
</dbReference>
<proteinExistence type="evidence at protein level"/>
<comment type="function">
    <text evidence="1 6 11 12 13 14 16 18 20 21 22 23 24 25 27 28 29 30">RNA-binding factor that recruits target transcripts to cytoplasmic protein-RNA complexes (mRNPs). This transcript 'caging' into mRNPs allows mRNA transport and transient storage. It also modulates the rate and location at which target transcripts encounter the translational apparatus and shields them from endonuclease attacks or microRNA-mediated degradation. Preferentially binds to N6-methyladenosine (m6A)-containing mRNAs and increases their stability (PubMed:29476152, PubMed:32245947). Plays a direct role in the transport and translation of transcripts required for axonal regeneration in adult sensory neurons (By similarity). Regulates localized beta-actin/ACTB mRNA translation, a crucial process for cell polarity, cell migration and neurite outgrowth. Co-transcriptionally associates with the ACTB mRNA in the nucleus. This binding involves a conserved 54-nucleotide element in the ACTB mRNA 3'-UTR, known as the 'zipcode'. The RNP thus formed is exported to the cytoplasm, binds to a motor protein and is transported along the cytoskeleton to the cell periphery. During transport, prevents ACTB mRNA from being translated into protein. When the RNP complex reaches its destination near the plasma membrane, IGF2BP1 is phosphorylated. This releases the mRNA, allowing ribosomal 40S and 60S subunits to assemble and initiate ACTB protein synthesis. Monomeric ACTB then assembles into the subcortical actin cytoskeleton (By similarity). During neuronal development, key regulator of neurite outgrowth, growth cone guidance and neuronal cell migration, presumably through the spatiotemporal fine tuning of protein synthesis, such as that of ACTB (By similarity). May regulate mRNA transport to activated synapses (By similarity). Binds to and stabilizes ABCB1/MDR-1 mRNA (By similarity). During interstinal wound repair, interacts with and stabilizes PTGS2 transcript. PTGS2 mRNA stabilization may be crucial for colonic mucosal wound healing (By similarity). Binds to the 3'-UTR of IGF2 mRNA by a mechanism of cooperative and sequential dimerization and regulates IGF2 mRNA subcellular localization and translation. Binds to MYC mRNA, in the coding region instability determinant (CRD) of the open reading frame (ORF), hence preventing MYC cleavage by endonucleases and possibly microRNA targeting to MYC-CRD (PubMed:29476152). Binding to MYC mRNA is enhanced by m6A-modification of the CRD (PubMed:29476152). Binds to the 3'-UTR of CD44 mRNA and stabilizes it, hence promotes cell adhesion and invadopodia formation in cancer cells. Binds to the oncofetal H19 transcript and to the neuron-specific TAU mRNA and regulates their localizations. Binds to and stabilizes BTRC/FBW1A mRNA. Binds to the adenine-rich autoregulatory sequence (ARS) located in PABPC1 mRNA and represses its translation. PABPC1 mRNA-binding is stimulated by PABPC1 protein. Prevents BTRC/FBW1A mRNA degradation by disrupting microRNA-dependent interaction with AGO2. Promotes the directed movement of tumor-derived cells by fine-tuning intracellular signaling networks. Binds to MAPK4 3'-UTR and inhibits its translation. Interacts with PTEN transcript open reading frame (ORF) and prevents mRNA decay. This combined action on MAPK4 (down-regulation) and PTEN (up-regulation) antagonizes HSPB1 phosphorylation, consequently it prevents G-actin sequestration by phosphorylated HSPB1, allowing F-actin polymerization. Hence enhances the velocity of cell migration and stimulates directed cell migration by PTEN-modulated polarization. Interacts with Hepatitis C virus (HCV) 5'-UTR and 3'-UTR and specifically enhances translation at the HCV IRES, but not 5'-cap-dependent translation, possibly by recruiting eIF3. Interacts with HIV-1 GAG protein and blocks the formation of infectious HIV-1 particles. Reduces HIV-1 assembly by inhibiting viral RNA packaging, as well as assembly and processing of GAG protein on cellular membranes. During cellular stress, such as oxidative stress or heat shock, stabilizes target mRNAs that are recruited to stress granules, including CD44, IGF2, MAPK4, MYC, PTEN, RAPGEF2 and RPS6KA5 transcripts.</text>
</comment>
<comment type="subunit">
    <text evidence="8 9 11 15 17 19 20 21 22 26 27 28">Can form homodimers and heterodimers with IGF2BP1 and IGF2BP3. Component of the coding region determinant (CRD)-mediated complex, composed of DHX9, HNRNPU, IGF2BP1, SYNCRIP and YBX1. During HCV infection, identified in a HCV IRES-mediated translation complex, at least composed of EIF3C, IGF2BP1, RPS3 and HCV RNA-replicon. Interacts (via the KH domains) with HIV-1 GAG (via the second zinc finger motif of NC). Associates (via the RRM domains and KH domains) with HIV-1 particles. Identified in a mRNP complex, composed of at least DHX9, DDX3X, ELAVL1, HNRNPU, IGF2BP1, ILF3, PABPC1, PCBP2, PTBP2, STAU1, STAU2, SYNCRIP and YBX1. Identified in a IGF2BP1-dependent mRNP granule complex containing untranslated mRNAs. Interacts with DHX9, ELAVL2, HNRNPA2B1, HNRNPC, HNRNPH1, HNRNPU, IGF2BP2, ILF2, and YBX1. Interacts with FMR1. Component of a multisubunit autoregulatory RNP complex (ARC), at least composed of IGF2BP1, PABPC1 and CSDE1/UNR. Directly interacts with PABPC1 (PubMed:17212783, PubMed:29476152, PubMed:32245947). Component of a TAU mRNP complex, at least composed of IGF2BP1, ELAVL4 and G3BP. Interacts with ELAVL4 in an RNA-dependent manner. Associates with microtubules and polysomes. Interacts with AGO1 and AGO2. Interacts with ELAVL1 and MATR3 (PubMed:29476152, PubMed:32245947). Interacts (via KH3 and KH4 domains) with SEPIN14P20 peptide RBRP; the interaction results in increased binding of IGF2BP1 to N6-methyladenosine (m6A)-containing mRNAs (PubMed:32245947).</text>
</comment>
<comment type="interaction">
    <interactant intactId="EBI-1053892">
        <id>Q9NZI8</id>
    </interactant>
    <interactant intactId="EBI-1053596">
        <id>Q13627</id>
        <label>DYRK1A</label>
    </interactant>
    <organismsDiffer>false</organismsDiffer>
    <experiments>3</experiments>
</comment>
<comment type="interaction">
    <interactant intactId="EBI-1053892">
        <id>Q9NZI8</id>
    </interactant>
    <interactant intactId="EBI-1055820">
        <id>Q9HCE1</id>
        <label>MOV10</label>
    </interactant>
    <organismsDiffer>false</organismsDiffer>
    <experiments>2</experiments>
</comment>
<comment type="interaction">
    <interactant intactId="EBI-1053892">
        <id>Q9NZI8</id>
    </interactant>
    <interactant intactId="EBI-358174">
        <id>O95793</id>
        <label>STAU1</label>
    </interactant>
    <organismsDiffer>false</organismsDiffer>
    <experiments>7</experiments>
</comment>
<comment type="interaction">
    <interactant intactId="EBI-1053892">
        <id>Q9NZI8</id>
    </interactant>
    <interactant intactId="EBI-1216533">
        <id>Q8VDS3</id>
        <label>Cbx7</label>
    </interactant>
    <organismsDiffer>true</organismsDiffer>
    <experiments>2</experiments>
</comment>
<comment type="subcellular location">
    <subcellularLocation>
        <location>Nucleus</location>
    </subcellularLocation>
    <subcellularLocation>
        <location evidence="17">Cytoplasm</location>
    </subcellularLocation>
    <subcellularLocation>
        <location>Cytoplasm</location>
        <location>Perinuclear region</location>
    </subcellularLocation>
    <subcellularLocation>
        <location evidence="27">Cytoplasm</location>
        <location evidence="27">P-body</location>
    </subcellularLocation>
    <subcellularLocation>
        <location evidence="14 27">Cytoplasm</location>
        <location evidence="14 27">Stress granule</location>
    </subcellularLocation>
    <subcellularLocation>
        <location>Cell projection</location>
        <location>Lamellipodium</location>
    </subcellularLocation>
    <subcellularLocation>
        <location evidence="1">Cell projection</location>
        <location evidence="1">Dendrite</location>
    </subcellularLocation>
    <subcellularLocation>
        <location evidence="1">Cell projection</location>
        <location evidence="1">Dendritic spine</location>
    </subcellularLocation>
    <subcellularLocation>
        <location>Cell projection</location>
        <location>Growth cone</location>
    </subcellularLocation>
    <subcellularLocation>
        <location evidence="1">Cell projection</location>
        <location evidence="1">Filopodium</location>
    </subcellularLocation>
    <subcellularLocation>
        <location evidence="1">Cell projection</location>
        <location evidence="1">Axon</location>
    </subcellularLocation>
    <text evidence="1">In the nucleus, located in discrete foci, coinciding with the sites of ACTB transcription (By similarity). In the cytoplasm, localizes in cytoplasmic mRNP granules. Colocalizes with microtubules in growth cone filopodia and along neurites in neuronal cells (By similarity). Cytoplasmic colocalization with ACTB mRNA is partially lost at the cell periphery, suggesting release of the transcript. In neuronal processes, exhibits fast retrograde and anterograde movements, when associated with ACTB mRNA; this motility is lost when the association is inhibited (By similarity). In hippocampal neurons, predominantly located within dendrites, particularly at dendritic branching points in young cells, compared to axons (By similarity). In axons, predominantly found in axonal branches and their growth cones (By similarity). In motile cells, such as migrating fibroblasts, localizes to leading edges where it colocalizes with microtubules and microfilaments and to retracting tails (By similarity). Dendritic levels are regulated by neuronal activity and glutaminergic signals: they are increased by KCl-induced depolarization, which induces rapid efflux from the cell body into dendrites, and decreased by the NMDA receptor agonist (By similarity). In motile cells, transported towards the leading edge into the cortical region of the lamellipodia where it is connected to microfilaments (By similarity). In response to cellular stress, such as oxidative stress or heat shock, recruited to stress granules, but not to processing bodies.</text>
</comment>
<comment type="alternative products">
    <event type="alternative splicing"/>
    <isoform>
        <id>Q9NZI8-1</id>
        <name>1</name>
        <sequence type="displayed"/>
    </isoform>
    <isoform>
        <id>Q9NZI8-2</id>
        <name>2</name>
        <sequence type="described" ref="VSP_045366"/>
    </isoform>
</comment>
<comment type="tissue specificity">
    <text evidence="7 10 16 30">Mainly expressed in the embryo, including in fetal liver, fetal lung, fetal kidney, fetal thymus (at protein level). Also expressed follicles of ovary, as well as in gonocytes of testis, spermatogonia, semen, oocytes and placenta (at protein level). Expressed in various cancers, including testis and lung cancers (at protein level), as well as kidney, prostate and trachea cancers.</text>
</comment>
<comment type="induction">
    <text evidence="13">May be up-regulated in response to CTNNB1/beta-catenin activation.</text>
</comment>
<comment type="domain">
    <text evidence="24 27">Domains KH3 and KH4 are the major RNA-binding modules, although KH1 and KH2 may also contribute (PubMed:29476152). KH1 and KH2, and possibly KH3 and KH4, promote the formation of higher ordered protein-RNA complexes, which may be essential for IGF2BP1 cytoplasmic retention. KH domains are required for RNA-dependent homo- and heterooligomerization and for localization to stress granules. KH3 and KH4 mediate association with the cytoskeleton. Two nuclear export signals (NES) have been identified in KH2 and KH4 domains, respectively. Only KH2 NES is XPO1-dependent. Both NES may be redundant, since individual in vitro mutations do not affect subcellular location of the full-length protein. The 4 KH domains are important to suppress HIV-1 infectivity.</text>
</comment>
<comment type="PTM">
    <text evidence="2">Phosphorylated at Ser-181 by mTORC2 cotranslationally, promoting binding to the 3'-UTR of IGF2 mRNA.</text>
</comment>
<comment type="similarity">
    <text evidence="32">Belongs to the RRM IMP/VICKZ family.</text>
</comment>
<comment type="online information" name="Atlas of Genetics and Cytogenetics in Oncology and Haematology">
    <link uri="https://atlasgeneticsoncology.org/gene/40969/IGF2BP1"/>
</comment>